<feature type="chain" id="PRO_1000094235" description="2-C-methyl-D-erythritol 2,4-cyclodiphosphate synthase">
    <location>
        <begin position="1"/>
        <end position="160"/>
    </location>
</feature>
<feature type="binding site" evidence="1">
    <location>
        <begin position="12"/>
        <end position="14"/>
    </location>
    <ligand>
        <name>4-CDP-2-C-methyl-D-erythritol 2-phosphate</name>
        <dbReference type="ChEBI" id="CHEBI:57919"/>
    </ligand>
</feature>
<feature type="binding site" evidence="1">
    <location>
        <position position="12"/>
    </location>
    <ligand>
        <name>a divalent metal cation</name>
        <dbReference type="ChEBI" id="CHEBI:60240"/>
    </ligand>
</feature>
<feature type="binding site" evidence="1">
    <location>
        <position position="14"/>
    </location>
    <ligand>
        <name>a divalent metal cation</name>
        <dbReference type="ChEBI" id="CHEBI:60240"/>
    </ligand>
</feature>
<feature type="binding site" evidence="1">
    <location>
        <begin position="38"/>
        <end position="39"/>
    </location>
    <ligand>
        <name>4-CDP-2-C-methyl-D-erythritol 2-phosphate</name>
        <dbReference type="ChEBI" id="CHEBI:57919"/>
    </ligand>
</feature>
<feature type="binding site" evidence="1">
    <location>
        <position position="46"/>
    </location>
    <ligand>
        <name>a divalent metal cation</name>
        <dbReference type="ChEBI" id="CHEBI:60240"/>
    </ligand>
</feature>
<feature type="binding site" evidence="1">
    <location>
        <begin position="60"/>
        <end position="62"/>
    </location>
    <ligand>
        <name>4-CDP-2-C-methyl-D-erythritol 2-phosphate</name>
        <dbReference type="ChEBI" id="CHEBI:57919"/>
    </ligand>
</feature>
<feature type="binding site" evidence="1">
    <location>
        <begin position="65"/>
        <end position="69"/>
    </location>
    <ligand>
        <name>4-CDP-2-C-methyl-D-erythritol 2-phosphate</name>
        <dbReference type="ChEBI" id="CHEBI:57919"/>
    </ligand>
</feature>
<feature type="binding site" evidence="1">
    <location>
        <begin position="136"/>
        <end position="139"/>
    </location>
    <ligand>
        <name>4-CDP-2-C-methyl-D-erythritol 2-phosphate</name>
        <dbReference type="ChEBI" id="CHEBI:57919"/>
    </ligand>
</feature>
<feature type="binding site" evidence="1">
    <location>
        <position position="143"/>
    </location>
    <ligand>
        <name>4-CDP-2-C-methyl-D-erythritol 2-phosphate</name>
        <dbReference type="ChEBI" id="CHEBI:57919"/>
    </ligand>
</feature>
<feature type="binding site" evidence="1">
    <location>
        <position position="146"/>
    </location>
    <ligand>
        <name>4-CDP-2-C-methyl-D-erythritol 2-phosphate</name>
        <dbReference type="ChEBI" id="CHEBI:57919"/>
    </ligand>
</feature>
<feature type="site" description="Transition state stabilizer" evidence="1">
    <location>
        <position position="38"/>
    </location>
</feature>
<feature type="site" description="Transition state stabilizer" evidence="1">
    <location>
        <position position="137"/>
    </location>
</feature>
<dbReference type="EC" id="4.6.1.12" evidence="1"/>
<dbReference type="EMBL" id="CU459141">
    <property type="protein sequence ID" value="CAM86467.1"/>
    <property type="molecule type" value="Genomic_DNA"/>
</dbReference>
<dbReference type="RefSeq" id="WP_000226512.1">
    <property type="nucleotide sequence ID" value="NZ_JBDGFB010000016.1"/>
</dbReference>
<dbReference type="SMR" id="B0V6G3"/>
<dbReference type="EnsemblBacteria" id="CAM86467">
    <property type="protein sequence ID" value="CAM86467"/>
    <property type="gene ID" value="ABAYE1569"/>
</dbReference>
<dbReference type="GeneID" id="92894244"/>
<dbReference type="KEGG" id="aby:ABAYE1569"/>
<dbReference type="HOGENOM" id="CLU_084630_2_0_6"/>
<dbReference type="UniPathway" id="UPA00056">
    <property type="reaction ID" value="UER00095"/>
</dbReference>
<dbReference type="GO" id="GO:0008685">
    <property type="term" value="F:2-C-methyl-D-erythritol 2,4-cyclodiphosphate synthase activity"/>
    <property type="evidence" value="ECO:0007669"/>
    <property type="project" value="UniProtKB-UniRule"/>
</dbReference>
<dbReference type="GO" id="GO:0046872">
    <property type="term" value="F:metal ion binding"/>
    <property type="evidence" value="ECO:0007669"/>
    <property type="project" value="UniProtKB-KW"/>
</dbReference>
<dbReference type="GO" id="GO:0019288">
    <property type="term" value="P:isopentenyl diphosphate biosynthetic process, methylerythritol 4-phosphate pathway"/>
    <property type="evidence" value="ECO:0007669"/>
    <property type="project" value="UniProtKB-UniRule"/>
</dbReference>
<dbReference type="GO" id="GO:0016114">
    <property type="term" value="P:terpenoid biosynthetic process"/>
    <property type="evidence" value="ECO:0007669"/>
    <property type="project" value="InterPro"/>
</dbReference>
<dbReference type="CDD" id="cd00554">
    <property type="entry name" value="MECDP_synthase"/>
    <property type="match status" value="1"/>
</dbReference>
<dbReference type="FunFam" id="3.30.1330.50:FF:000001">
    <property type="entry name" value="2-C-methyl-D-erythritol 2,4-cyclodiphosphate synthase"/>
    <property type="match status" value="1"/>
</dbReference>
<dbReference type="Gene3D" id="3.30.1330.50">
    <property type="entry name" value="2-C-methyl-D-erythritol 2,4-cyclodiphosphate synthase"/>
    <property type="match status" value="1"/>
</dbReference>
<dbReference type="HAMAP" id="MF_00107">
    <property type="entry name" value="IspF"/>
    <property type="match status" value="1"/>
</dbReference>
<dbReference type="InterPro" id="IPR003526">
    <property type="entry name" value="MECDP_synthase"/>
</dbReference>
<dbReference type="InterPro" id="IPR020555">
    <property type="entry name" value="MECDP_synthase_CS"/>
</dbReference>
<dbReference type="InterPro" id="IPR036571">
    <property type="entry name" value="MECDP_synthase_sf"/>
</dbReference>
<dbReference type="NCBIfam" id="TIGR00151">
    <property type="entry name" value="ispF"/>
    <property type="match status" value="1"/>
</dbReference>
<dbReference type="PANTHER" id="PTHR43181">
    <property type="entry name" value="2-C-METHYL-D-ERYTHRITOL 2,4-CYCLODIPHOSPHATE SYNTHASE, CHLOROPLASTIC"/>
    <property type="match status" value="1"/>
</dbReference>
<dbReference type="PANTHER" id="PTHR43181:SF1">
    <property type="entry name" value="2-C-METHYL-D-ERYTHRITOL 2,4-CYCLODIPHOSPHATE SYNTHASE, CHLOROPLASTIC"/>
    <property type="match status" value="1"/>
</dbReference>
<dbReference type="Pfam" id="PF02542">
    <property type="entry name" value="YgbB"/>
    <property type="match status" value="1"/>
</dbReference>
<dbReference type="SUPFAM" id="SSF69765">
    <property type="entry name" value="IpsF-like"/>
    <property type="match status" value="1"/>
</dbReference>
<dbReference type="PROSITE" id="PS01350">
    <property type="entry name" value="ISPF"/>
    <property type="match status" value="1"/>
</dbReference>
<name>ISPF_ACIBY</name>
<protein>
    <recommendedName>
        <fullName evidence="1">2-C-methyl-D-erythritol 2,4-cyclodiphosphate synthase</fullName>
        <shortName evidence="1">MECDP-synthase</shortName>
        <shortName evidence="1">MECPP-synthase</shortName>
        <shortName evidence="1">MECPS</shortName>
        <ecNumber evidence="1">4.6.1.12</ecNumber>
    </recommendedName>
</protein>
<keyword id="KW-0414">Isoprene biosynthesis</keyword>
<keyword id="KW-0456">Lyase</keyword>
<keyword id="KW-0479">Metal-binding</keyword>
<reference key="1">
    <citation type="journal article" date="2008" name="PLoS ONE">
        <title>Comparative analysis of Acinetobacters: three genomes for three lifestyles.</title>
        <authorList>
            <person name="Vallenet D."/>
            <person name="Nordmann P."/>
            <person name="Barbe V."/>
            <person name="Poirel L."/>
            <person name="Mangenot S."/>
            <person name="Bataille E."/>
            <person name="Dossat C."/>
            <person name="Gas S."/>
            <person name="Kreimeyer A."/>
            <person name="Lenoble P."/>
            <person name="Oztas S."/>
            <person name="Poulain J."/>
            <person name="Segurens B."/>
            <person name="Robert C."/>
            <person name="Abergel C."/>
            <person name="Claverie J.-M."/>
            <person name="Raoult D."/>
            <person name="Medigue C."/>
            <person name="Weissenbach J."/>
            <person name="Cruveiller S."/>
        </authorList>
    </citation>
    <scope>NUCLEOTIDE SEQUENCE [LARGE SCALE GENOMIC DNA]</scope>
    <source>
        <strain>AYE</strain>
    </source>
</reference>
<organism>
    <name type="scientific">Acinetobacter baumannii (strain AYE)</name>
    <dbReference type="NCBI Taxonomy" id="509173"/>
    <lineage>
        <taxon>Bacteria</taxon>
        <taxon>Pseudomonadati</taxon>
        <taxon>Pseudomonadota</taxon>
        <taxon>Gammaproteobacteria</taxon>
        <taxon>Moraxellales</taxon>
        <taxon>Moraxellaceae</taxon>
        <taxon>Acinetobacter</taxon>
        <taxon>Acinetobacter calcoaceticus/baumannii complex</taxon>
    </lineage>
</organism>
<gene>
    <name evidence="1" type="primary">ispF</name>
    <name type="ordered locus">ABAYE1569</name>
</gene>
<sequence length="160" mass="17375">MVAQIRIGQGMDVHAFEEGNFVTLAGVQIPHTHGLKAHSDGDVVLHALCDALLGALALGDIGQHFPDTDPEFKGADSRVLLKHVYQLILDRGYHLNNADITVACERPKLAKYNLEMRQSIADVLNVDLNQISIKATTTEKLGFTGRQEGILATATVLISH</sequence>
<accession>B0V6G3</accession>
<proteinExistence type="inferred from homology"/>
<evidence type="ECO:0000255" key="1">
    <source>
        <dbReference type="HAMAP-Rule" id="MF_00107"/>
    </source>
</evidence>
<comment type="function">
    <text evidence="1">Involved in the biosynthesis of isopentenyl diphosphate (IPP) and dimethylallyl diphosphate (DMAPP), two major building blocks of isoprenoid compounds. Catalyzes the conversion of 4-diphosphocytidyl-2-C-methyl-D-erythritol 2-phosphate (CDP-ME2P) to 2-C-methyl-D-erythritol 2,4-cyclodiphosphate (ME-CPP) with a corresponding release of cytidine 5-monophosphate (CMP).</text>
</comment>
<comment type="catalytic activity">
    <reaction evidence="1">
        <text>4-CDP-2-C-methyl-D-erythritol 2-phosphate = 2-C-methyl-D-erythritol 2,4-cyclic diphosphate + CMP</text>
        <dbReference type="Rhea" id="RHEA:23864"/>
        <dbReference type="ChEBI" id="CHEBI:57919"/>
        <dbReference type="ChEBI" id="CHEBI:58483"/>
        <dbReference type="ChEBI" id="CHEBI:60377"/>
        <dbReference type="EC" id="4.6.1.12"/>
    </reaction>
</comment>
<comment type="cofactor">
    <cofactor evidence="1">
        <name>a divalent metal cation</name>
        <dbReference type="ChEBI" id="CHEBI:60240"/>
    </cofactor>
    <text evidence="1">Binds 1 divalent metal cation per subunit.</text>
</comment>
<comment type="pathway">
    <text evidence="1">Isoprenoid biosynthesis; isopentenyl diphosphate biosynthesis via DXP pathway; isopentenyl diphosphate from 1-deoxy-D-xylulose 5-phosphate: step 4/6.</text>
</comment>
<comment type="subunit">
    <text evidence="1">Homotrimer.</text>
</comment>
<comment type="similarity">
    <text evidence="1">Belongs to the IspF family.</text>
</comment>